<proteinExistence type="inferred from homology"/>
<sequence>MVRYKATISYDGTLFSGFQRQRHLRTVQEEIEKTLYKLNNGTKIIIHGAGRTDAGVHAYGQVIHFDLPQEQEVEKLRFALDTQTPEDIDVVNIEKVADDFHCRYQKHLKTYEFLVDNGRPKNPMMRHYTTHYPYTLNIKLMQEAINGLVGTHDFTGFTAAGTSVQNKVRTITKATVSRDEKTDFLVFTFSGNGFLYKQVRNMVGTLLKIGNGQMPVEQVKVILSSKNRQLAGPTISGNGLYLKEICYEN</sequence>
<dbReference type="EC" id="5.4.99.12" evidence="1"/>
<dbReference type="EMBL" id="AE009949">
    <property type="protein sequence ID" value="AAL98457.1"/>
    <property type="molecule type" value="Genomic_DNA"/>
</dbReference>
<dbReference type="RefSeq" id="WP_002988132.1">
    <property type="nucleotide sequence ID" value="NC_003485.1"/>
</dbReference>
<dbReference type="SMR" id="P65851"/>
<dbReference type="KEGG" id="spm:spyM18_1966"/>
<dbReference type="HOGENOM" id="CLU_014673_0_1_9"/>
<dbReference type="GO" id="GO:0003723">
    <property type="term" value="F:RNA binding"/>
    <property type="evidence" value="ECO:0007669"/>
    <property type="project" value="InterPro"/>
</dbReference>
<dbReference type="GO" id="GO:0160147">
    <property type="term" value="F:tRNA pseudouridine(38-40) synthase activity"/>
    <property type="evidence" value="ECO:0007669"/>
    <property type="project" value="UniProtKB-EC"/>
</dbReference>
<dbReference type="GO" id="GO:0031119">
    <property type="term" value="P:tRNA pseudouridine synthesis"/>
    <property type="evidence" value="ECO:0007669"/>
    <property type="project" value="UniProtKB-UniRule"/>
</dbReference>
<dbReference type="CDD" id="cd02570">
    <property type="entry name" value="PseudoU_synth_EcTruA"/>
    <property type="match status" value="1"/>
</dbReference>
<dbReference type="FunFam" id="3.30.70.580:FF:000001">
    <property type="entry name" value="tRNA pseudouridine synthase A"/>
    <property type="match status" value="1"/>
</dbReference>
<dbReference type="Gene3D" id="3.30.70.660">
    <property type="entry name" value="Pseudouridine synthase I, catalytic domain, C-terminal subdomain"/>
    <property type="match status" value="1"/>
</dbReference>
<dbReference type="Gene3D" id="3.30.70.580">
    <property type="entry name" value="Pseudouridine synthase I, catalytic domain, N-terminal subdomain"/>
    <property type="match status" value="1"/>
</dbReference>
<dbReference type="HAMAP" id="MF_00171">
    <property type="entry name" value="TruA"/>
    <property type="match status" value="1"/>
</dbReference>
<dbReference type="InterPro" id="IPR020103">
    <property type="entry name" value="PsdUridine_synth_cat_dom_sf"/>
</dbReference>
<dbReference type="InterPro" id="IPR001406">
    <property type="entry name" value="PsdUridine_synth_TruA"/>
</dbReference>
<dbReference type="InterPro" id="IPR020097">
    <property type="entry name" value="PsdUridine_synth_TruA_a/b_dom"/>
</dbReference>
<dbReference type="InterPro" id="IPR020095">
    <property type="entry name" value="PsdUridine_synth_TruA_C"/>
</dbReference>
<dbReference type="InterPro" id="IPR020094">
    <property type="entry name" value="TruA/RsuA/RluB/E/F_N"/>
</dbReference>
<dbReference type="NCBIfam" id="TIGR00071">
    <property type="entry name" value="hisT_truA"/>
    <property type="match status" value="1"/>
</dbReference>
<dbReference type="PANTHER" id="PTHR11142">
    <property type="entry name" value="PSEUDOURIDYLATE SYNTHASE"/>
    <property type="match status" value="1"/>
</dbReference>
<dbReference type="PANTHER" id="PTHR11142:SF0">
    <property type="entry name" value="TRNA PSEUDOURIDINE SYNTHASE-LIKE 1"/>
    <property type="match status" value="1"/>
</dbReference>
<dbReference type="Pfam" id="PF01416">
    <property type="entry name" value="PseudoU_synth_1"/>
    <property type="match status" value="2"/>
</dbReference>
<dbReference type="PIRSF" id="PIRSF001430">
    <property type="entry name" value="tRNA_psdUrid_synth"/>
    <property type="match status" value="1"/>
</dbReference>
<dbReference type="SUPFAM" id="SSF55120">
    <property type="entry name" value="Pseudouridine synthase"/>
    <property type="match status" value="1"/>
</dbReference>
<gene>
    <name evidence="1" type="primary">truA</name>
    <name type="ordered locus">spyM18_1966</name>
</gene>
<evidence type="ECO:0000255" key="1">
    <source>
        <dbReference type="HAMAP-Rule" id="MF_00171"/>
    </source>
</evidence>
<keyword id="KW-0413">Isomerase</keyword>
<keyword id="KW-0819">tRNA processing</keyword>
<reference key="1">
    <citation type="journal article" date="2002" name="Proc. Natl. Acad. Sci. U.S.A.">
        <title>Genome sequence and comparative microarray analysis of serotype M18 group A Streptococcus strains associated with acute rheumatic fever outbreaks.</title>
        <authorList>
            <person name="Smoot J.C."/>
            <person name="Barbian K.D."/>
            <person name="Van Gompel J.J."/>
            <person name="Smoot L.M."/>
            <person name="Chaussee M.S."/>
            <person name="Sylva G.L."/>
            <person name="Sturdevant D.E."/>
            <person name="Ricklefs S.M."/>
            <person name="Porcella S.F."/>
            <person name="Parkins L.D."/>
            <person name="Beres S.B."/>
            <person name="Campbell D.S."/>
            <person name="Smith T.M."/>
            <person name="Zhang Q."/>
            <person name="Kapur V."/>
            <person name="Daly J.A."/>
            <person name="Veasy L.G."/>
            <person name="Musser J.M."/>
        </authorList>
    </citation>
    <scope>NUCLEOTIDE SEQUENCE [LARGE SCALE GENOMIC DNA]</scope>
    <source>
        <strain>MGAS8232</strain>
    </source>
</reference>
<protein>
    <recommendedName>
        <fullName evidence="1">tRNA pseudouridine synthase A</fullName>
        <ecNumber evidence="1">5.4.99.12</ecNumber>
    </recommendedName>
    <alternativeName>
        <fullName evidence="1">tRNA pseudouridine(38-40) synthase</fullName>
    </alternativeName>
    <alternativeName>
        <fullName evidence="1">tRNA pseudouridylate synthase I</fullName>
    </alternativeName>
    <alternativeName>
        <fullName evidence="1">tRNA-uridine isomerase I</fullName>
    </alternativeName>
</protein>
<organism>
    <name type="scientific">Streptococcus pyogenes serotype M18 (strain MGAS8232)</name>
    <dbReference type="NCBI Taxonomy" id="186103"/>
    <lineage>
        <taxon>Bacteria</taxon>
        <taxon>Bacillati</taxon>
        <taxon>Bacillota</taxon>
        <taxon>Bacilli</taxon>
        <taxon>Lactobacillales</taxon>
        <taxon>Streptococcaceae</taxon>
        <taxon>Streptococcus</taxon>
    </lineage>
</organism>
<comment type="function">
    <text evidence="1">Formation of pseudouridine at positions 38, 39 and 40 in the anticodon stem and loop of transfer RNAs.</text>
</comment>
<comment type="catalytic activity">
    <reaction evidence="1">
        <text>uridine(38/39/40) in tRNA = pseudouridine(38/39/40) in tRNA</text>
        <dbReference type="Rhea" id="RHEA:22376"/>
        <dbReference type="Rhea" id="RHEA-COMP:10085"/>
        <dbReference type="Rhea" id="RHEA-COMP:10087"/>
        <dbReference type="ChEBI" id="CHEBI:65314"/>
        <dbReference type="ChEBI" id="CHEBI:65315"/>
        <dbReference type="EC" id="5.4.99.12"/>
    </reaction>
</comment>
<comment type="subunit">
    <text evidence="1">Homodimer.</text>
</comment>
<comment type="similarity">
    <text evidence="1">Belongs to the tRNA pseudouridine synthase TruA family.</text>
</comment>
<name>TRUA_STRP8</name>
<accession>P65851</accession>
<accession>Q99Y28</accession>
<feature type="chain" id="PRO_0000057467" description="tRNA pseudouridine synthase A">
    <location>
        <begin position="1"/>
        <end position="249"/>
    </location>
</feature>
<feature type="active site" description="Nucleophile" evidence="1">
    <location>
        <position position="53"/>
    </location>
</feature>
<feature type="binding site" evidence="1">
    <location>
        <position position="111"/>
    </location>
    <ligand>
        <name>substrate</name>
    </ligand>
</feature>